<keyword id="KW-0012">Acyltransferase</keyword>
<keyword id="KW-0963">Cytoplasm</keyword>
<keyword id="KW-0808">Transferase</keyword>
<comment type="function">
    <text evidence="1">Functions in the N-end rule pathway of protein degradation where it conjugates Leu, Phe and, less efficiently, Met from aminoacyl-tRNAs to the N-termini of proteins containing an N-terminal arginine or lysine.</text>
</comment>
<comment type="catalytic activity">
    <reaction evidence="1">
        <text>N-terminal L-lysyl-[protein] + L-leucyl-tRNA(Leu) = N-terminal L-leucyl-L-lysyl-[protein] + tRNA(Leu) + H(+)</text>
        <dbReference type="Rhea" id="RHEA:12340"/>
        <dbReference type="Rhea" id="RHEA-COMP:9613"/>
        <dbReference type="Rhea" id="RHEA-COMP:9622"/>
        <dbReference type="Rhea" id="RHEA-COMP:12670"/>
        <dbReference type="Rhea" id="RHEA-COMP:12671"/>
        <dbReference type="ChEBI" id="CHEBI:15378"/>
        <dbReference type="ChEBI" id="CHEBI:65249"/>
        <dbReference type="ChEBI" id="CHEBI:78442"/>
        <dbReference type="ChEBI" id="CHEBI:78494"/>
        <dbReference type="ChEBI" id="CHEBI:133043"/>
        <dbReference type="EC" id="2.3.2.6"/>
    </reaction>
</comment>
<comment type="catalytic activity">
    <reaction evidence="1">
        <text>N-terminal L-arginyl-[protein] + L-leucyl-tRNA(Leu) = N-terminal L-leucyl-L-arginyl-[protein] + tRNA(Leu) + H(+)</text>
        <dbReference type="Rhea" id="RHEA:50416"/>
        <dbReference type="Rhea" id="RHEA-COMP:9613"/>
        <dbReference type="Rhea" id="RHEA-COMP:9622"/>
        <dbReference type="Rhea" id="RHEA-COMP:12672"/>
        <dbReference type="Rhea" id="RHEA-COMP:12673"/>
        <dbReference type="ChEBI" id="CHEBI:15378"/>
        <dbReference type="ChEBI" id="CHEBI:64719"/>
        <dbReference type="ChEBI" id="CHEBI:78442"/>
        <dbReference type="ChEBI" id="CHEBI:78494"/>
        <dbReference type="ChEBI" id="CHEBI:133044"/>
        <dbReference type="EC" id="2.3.2.6"/>
    </reaction>
</comment>
<comment type="catalytic activity">
    <reaction evidence="1">
        <text>L-phenylalanyl-tRNA(Phe) + an N-terminal L-alpha-aminoacyl-[protein] = an N-terminal L-phenylalanyl-L-alpha-aminoacyl-[protein] + tRNA(Phe)</text>
        <dbReference type="Rhea" id="RHEA:43632"/>
        <dbReference type="Rhea" id="RHEA-COMP:9668"/>
        <dbReference type="Rhea" id="RHEA-COMP:9699"/>
        <dbReference type="Rhea" id="RHEA-COMP:10636"/>
        <dbReference type="Rhea" id="RHEA-COMP:10637"/>
        <dbReference type="ChEBI" id="CHEBI:78442"/>
        <dbReference type="ChEBI" id="CHEBI:78531"/>
        <dbReference type="ChEBI" id="CHEBI:78597"/>
        <dbReference type="ChEBI" id="CHEBI:83561"/>
        <dbReference type="EC" id="2.3.2.6"/>
    </reaction>
</comment>
<comment type="subcellular location">
    <subcellularLocation>
        <location evidence="1">Cytoplasm</location>
    </subcellularLocation>
</comment>
<comment type="similarity">
    <text evidence="1">Belongs to the L/F-transferase family.</text>
</comment>
<protein>
    <recommendedName>
        <fullName evidence="1">Leucyl/phenylalanyl-tRNA--protein transferase</fullName>
        <ecNumber evidence="1">2.3.2.6</ecNumber>
    </recommendedName>
    <alternativeName>
        <fullName evidence="1">L/F-transferase</fullName>
    </alternativeName>
    <alternativeName>
        <fullName evidence="1">Leucyltransferase</fullName>
    </alternativeName>
    <alternativeName>
        <fullName evidence="1">Phenyalanyltransferase</fullName>
    </alternativeName>
</protein>
<accession>C0PXS2</accession>
<evidence type="ECO:0000255" key="1">
    <source>
        <dbReference type="HAMAP-Rule" id="MF_00688"/>
    </source>
</evidence>
<sequence>MRLVQLSRHSIAFPSPEGALREPNGLLALGGDLSPARLLMAYQHGIFPWFSPGDPILWWSPDPRAVLWPEKFHLSRSMKRFHNASPYRVTLNYAFDRVIDGCANHRDEGTWITRGIEEAYRRLHELGHAHSIEVWRDRELVGGMYGVSQGALFCGESMFSRQENASKTALLVFCAEFTRHGGKLIDCQVLNSHTASLGAIEIPRRDYLDHLAALRQQPLASRFWVPRTLFLPRK</sequence>
<proteinExistence type="inferred from homology"/>
<name>LFTR_SALPC</name>
<feature type="chain" id="PRO_1000147795" description="Leucyl/phenylalanyl-tRNA--protein transferase">
    <location>
        <begin position="1"/>
        <end position="234"/>
    </location>
</feature>
<dbReference type="EC" id="2.3.2.6" evidence="1"/>
<dbReference type="EMBL" id="CP000857">
    <property type="protein sequence ID" value="ACN45122.1"/>
    <property type="molecule type" value="Genomic_DNA"/>
</dbReference>
<dbReference type="RefSeq" id="WP_001241650.1">
    <property type="nucleotide sequence ID" value="NC_012125.1"/>
</dbReference>
<dbReference type="SMR" id="C0PXS2"/>
<dbReference type="KEGG" id="sei:SPC_0955"/>
<dbReference type="HOGENOM" id="CLU_075045_0_0_6"/>
<dbReference type="Proteomes" id="UP000001599">
    <property type="component" value="Chromosome"/>
</dbReference>
<dbReference type="GO" id="GO:0005737">
    <property type="term" value="C:cytoplasm"/>
    <property type="evidence" value="ECO:0007669"/>
    <property type="project" value="UniProtKB-SubCell"/>
</dbReference>
<dbReference type="GO" id="GO:0008914">
    <property type="term" value="F:leucyl-tRNA--protein transferase activity"/>
    <property type="evidence" value="ECO:0007669"/>
    <property type="project" value="UniProtKB-UniRule"/>
</dbReference>
<dbReference type="GO" id="GO:0030163">
    <property type="term" value="P:protein catabolic process"/>
    <property type="evidence" value="ECO:0007669"/>
    <property type="project" value="UniProtKB-UniRule"/>
</dbReference>
<dbReference type="FunFam" id="3.30.70.3550:FF:000001">
    <property type="entry name" value="Leucyl/phenylalanyl-tRNA--protein transferase"/>
    <property type="match status" value="1"/>
</dbReference>
<dbReference type="FunFam" id="3.40.630.70:FF:000001">
    <property type="entry name" value="Leucyl/phenylalanyl-tRNA--protein transferase"/>
    <property type="match status" value="1"/>
</dbReference>
<dbReference type="Gene3D" id="3.40.630.70">
    <property type="entry name" value="Leucyl/phenylalanyl-tRNA-protein transferase, C-terminal domain"/>
    <property type="match status" value="1"/>
</dbReference>
<dbReference type="Gene3D" id="3.30.70.3550">
    <property type="entry name" value="Leucyl/phenylalanyl-tRNA-protein transferase, N-terminal domain"/>
    <property type="match status" value="1"/>
</dbReference>
<dbReference type="HAMAP" id="MF_00688">
    <property type="entry name" value="Leu_Phe_trans"/>
    <property type="match status" value="1"/>
</dbReference>
<dbReference type="InterPro" id="IPR016181">
    <property type="entry name" value="Acyl_CoA_acyltransferase"/>
</dbReference>
<dbReference type="InterPro" id="IPR004616">
    <property type="entry name" value="Leu/Phe-tRNA_Trfase"/>
</dbReference>
<dbReference type="InterPro" id="IPR042203">
    <property type="entry name" value="Leu/Phe-tRNA_Trfase_C"/>
</dbReference>
<dbReference type="InterPro" id="IPR042221">
    <property type="entry name" value="Leu/Phe-tRNA_Trfase_N"/>
</dbReference>
<dbReference type="NCBIfam" id="TIGR00667">
    <property type="entry name" value="aat"/>
    <property type="match status" value="1"/>
</dbReference>
<dbReference type="PANTHER" id="PTHR30098">
    <property type="entry name" value="LEUCYL/PHENYLALANYL-TRNA--PROTEIN TRANSFERASE"/>
    <property type="match status" value="1"/>
</dbReference>
<dbReference type="PANTHER" id="PTHR30098:SF2">
    <property type="entry name" value="LEUCYL_PHENYLALANYL-TRNA--PROTEIN TRANSFERASE"/>
    <property type="match status" value="1"/>
</dbReference>
<dbReference type="Pfam" id="PF03588">
    <property type="entry name" value="Leu_Phe_trans"/>
    <property type="match status" value="1"/>
</dbReference>
<dbReference type="SUPFAM" id="SSF55729">
    <property type="entry name" value="Acyl-CoA N-acyltransferases (Nat)"/>
    <property type="match status" value="1"/>
</dbReference>
<gene>
    <name evidence="1" type="primary">aat</name>
    <name type="ordered locus">SPC_0955</name>
</gene>
<reference key="1">
    <citation type="journal article" date="2009" name="PLoS ONE">
        <title>Salmonella paratyphi C: genetic divergence from Salmonella choleraesuis and pathogenic convergence with Salmonella typhi.</title>
        <authorList>
            <person name="Liu W.-Q."/>
            <person name="Feng Y."/>
            <person name="Wang Y."/>
            <person name="Zou Q.-H."/>
            <person name="Chen F."/>
            <person name="Guo J.-T."/>
            <person name="Peng Y.-H."/>
            <person name="Jin Y."/>
            <person name="Li Y.-G."/>
            <person name="Hu S.-N."/>
            <person name="Johnston R.N."/>
            <person name="Liu G.-R."/>
            <person name="Liu S.-L."/>
        </authorList>
    </citation>
    <scope>NUCLEOTIDE SEQUENCE [LARGE SCALE GENOMIC DNA]</scope>
    <source>
        <strain>RKS4594</strain>
    </source>
</reference>
<organism>
    <name type="scientific">Salmonella paratyphi C (strain RKS4594)</name>
    <dbReference type="NCBI Taxonomy" id="476213"/>
    <lineage>
        <taxon>Bacteria</taxon>
        <taxon>Pseudomonadati</taxon>
        <taxon>Pseudomonadota</taxon>
        <taxon>Gammaproteobacteria</taxon>
        <taxon>Enterobacterales</taxon>
        <taxon>Enterobacteriaceae</taxon>
        <taxon>Salmonella</taxon>
    </lineage>
</organism>